<proteinExistence type="evidence at transcript level"/>
<accession>Q9LRK8</accession>
<name>CRR29_ARATH</name>
<reference key="1">
    <citation type="journal article" date="2000" name="DNA Res.">
        <title>Structural analysis of Arabidopsis thaliana chromosome 3. I. Sequence features of the regions of 4,504,864 bp covered by sixty P1 and TAC clones.</title>
        <authorList>
            <person name="Sato S."/>
            <person name="Nakamura Y."/>
            <person name="Kaneko T."/>
            <person name="Katoh T."/>
            <person name="Asamizu E."/>
            <person name="Tabata S."/>
        </authorList>
    </citation>
    <scope>NUCLEOTIDE SEQUENCE [LARGE SCALE GENOMIC DNA]</scope>
    <source>
        <strain>cv. Columbia</strain>
    </source>
</reference>
<reference key="2">
    <citation type="journal article" date="2017" name="Plant J.">
        <title>Araport11: a complete reannotation of the Arabidopsis thaliana reference genome.</title>
        <authorList>
            <person name="Cheng C.Y."/>
            <person name="Krishnakumar V."/>
            <person name="Chan A.P."/>
            <person name="Thibaud-Nissen F."/>
            <person name="Schobel S."/>
            <person name="Town C.D."/>
        </authorList>
    </citation>
    <scope>GENOME REANNOTATION</scope>
    <source>
        <strain>cv. Columbia</strain>
    </source>
</reference>
<reference key="3">
    <citation type="journal article" date="2001" name="Plant Physiol.">
        <title>A superfamily of proteins with novel cysteine-rich repeats.</title>
        <authorList>
            <person name="Chen Z."/>
        </authorList>
    </citation>
    <scope>GENE FAMILY ORGANIZATION</scope>
    <scope>NOMENCLATURE</scope>
</reference>
<dbReference type="EMBL" id="AB028622">
    <property type="protein sequence ID" value="BAB01382.1"/>
    <property type="molecule type" value="Genomic_DNA"/>
</dbReference>
<dbReference type="EMBL" id="CP002686">
    <property type="protein sequence ID" value="AEE76575.1"/>
    <property type="molecule type" value="Genomic_DNA"/>
</dbReference>
<dbReference type="RefSeq" id="NP_188837.1">
    <property type="nucleotide sequence ID" value="NM_113095.2"/>
</dbReference>
<dbReference type="SMR" id="Q9LRK8"/>
<dbReference type="FunCoup" id="Q9LRK8">
    <property type="interactions" value="10"/>
</dbReference>
<dbReference type="STRING" id="3702.Q9LRK8"/>
<dbReference type="iPTMnet" id="Q9LRK8"/>
<dbReference type="PaxDb" id="3702-AT3G21990.1"/>
<dbReference type="ProteomicsDB" id="220340"/>
<dbReference type="EnsemblPlants" id="AT3G21990.1">
    <property type="protein sequence ID" value="AT3G21990.1"/>
    <property type="gene ID" value="AT3G21990"/>
</dbReference>
<dbReference type="GeneID" id="821759"/>
<dbReference type="Gramene" id="AT3G21990.1">
    <property type="protein sequence ID" value="AT3G21990.1"/>
    <property type="gene ID" value="AT3G21990"/>
</dbReference>
<dbReference type="KEGG" id="ath:AT3G21990"/>
<dbReference type="Araport" id="AT3G21990"/>
<dbReference type="TAIR" id="AT3G21990"/>
<dbReference type="eggNOG" id="ENOG502QPWH">
    <property type="taxonomic scope" value="Eukaryota"/>
</dbReference>
<dbReference type="HOGENOM" id="CLU_000288_35_0_1"/>
<dbReference type="InParanoid" id="Q9LRK8"/>
<dbReference type="OMA" id="LEWIFRM"/>
<dbReference type="OrthoDB" id="1909574at2759"/>
<dbReference type="PhylomeDB" id="Q9LRK8"/>
<dbReference type="PRO" id="PR:Q9LRK8"/>
<dbReference type="Proteomes" id="UP000006548">
    <property type="component" value="Chromosome 3"/>
</dbReference>
<dbReference type="ExpressionAtlas" id="Q9LRK8">
    <property type="expression patterns" value="baseline"/>
</dbReference>
<dbReference type="GO" id="GO:0005576">
    <property type="term" value="C:extracellular region"/>
    <property type="evidence" value="ECO:0007669"/>
    <property type="project" value="UniProtKB-SubCell"/>
</dbReference>
<dbReference type="CDD" id="cd23509">
    <property type="entry name" value="Gnk2-like"/>
    <property type="match status" value="2"/>
</dbReference>
<dbReference type="FunFam" id="3.30.430.20:FF:000002">
    <property type="entry name" value="Cysteine-rich receptor-like protein kinase 10"/>
    <property type="match status" value="1"/>
</dbReference>
<dbReference type="Gene3D" id="3.30.430.20">
    <property type="entry name" value="Gnk2 domain, C-X8-C-X2-C motif"/>
    <property type="match status" value="2"/>
</dbReference>
<dbReference type="InterPro" id="IPR050581">
    <property type="entry name" value="CRR_secretory_protein"/>
</dbReference>
<dbReference type="InterPro" id="IPR002902">
    <property type="entry name" value="GNK2"/>
</dbReference>
<dbReference type="InterPro" id="IPR038408">
    <property type="entry name" value="GNK2_sf"/>
</dbReference>
<dbReference type="PANTHER" id="PTHR32411:SF54">
    <property type="entry name" value="CYSTEINE-RICH REPEAT SECRETORY PROTEIN 29-RELATED"/>
    <property type="match status" value="1"/>
</dbReference>
<dbReference type="PANTHER" id="PTHR32411">
    <property type="entry name" value="CYSTEINE-RICH REPEAT SECRETORY PROTEIN 38-RELATED"/>
    <property type="match status" value="1"/>
</dbReference>
<dbReference type="Pfam" id="PF01657">
    <property type="entry name" value="Stress-antifung"/>
    <property type="match status" value="2"/>
</dbReference>
<dbReference type="PROSITE" id="PS51473">
    <property type="entry name" value="GNK2"/>
    <property type="match status" value="2"/>
</dbReference>
<protein>
    <recommendedName>
        <fullName>Cysteine-rich repeat secretory protein 29</fullName>
    </recommendedName>
</protein>
<gene>
    <name type="primary">CRRSP29</name>
    <name type="ordered locus">At3g21990</name>
    <name type="ORF">MZN24.17</name>
</gene>
<feature type="signal peptide" evidence="1">
    <location>
        <begin position="1"/>
        <end position="26"/>
    </location>
</feature>
<feature type="chain" id="PRO_0000296157" description="Cysteine-rich repeat secretory protein 29">
    <location>
        <begin position="27"/>
        <end position="256"/>
    </location>
</feature>
<feature type="domain" description="Gnk2-homologous 1" evidence="2">
    <location>
        <begin position="33"/>
        <end position="136"/>
    </location>
</feature>
<feature type="domain" description="Gnk2-homologous 2" evidence="2">
    <location>
        <begin position="142"/>
        <end position="253"/>
    </location>
</feature>
<evidence type="ECO:0000255" key="1"/>
<evidence type="ECO:0000255" key="2">
    <source>
        <dbReference type="PROSITE-ProRule" id="PRU00806"/>
    </source>
</evidence>
<evidence type="ECO:0000305" key="3"/>
<organism>
    <name type="scientific">Arabidopsis thaliana</name>
    <name type="common">Mouse-ear cress</name>
    <dbReference type="NCBI Taxonomy" id="3702"/>
    <lineage>
        <taxon>Eukaryota</taxon>
        <taxon>Viridiplantae</taxon>
        <taxon>Streptophyta</taxon>
        <taxon>Embryophyta</taxon>
        <taxon>Tracheophyta</taxon>
        <taxon>Spermatophyta</taxon>
        <taxon>Magnoliopsida</taxon>
        <taxon>eudicotyledons</taxon>
        <taxon>Gunneridae</taxon>
        <taxon>Pentapetalae</taxon>
        <taxon>rosids</taxon>
        <taxon>malvids</taxon>
        <taxon>Brassicales</taxon>
        <taxon>Brassicaceae</taxon>
        <taxon>Camelineae</taxon>
        <taxon>Arabidopsis</taxon>
    </lineage>
</organism>
<comment type="subcellular location">
    <subcellularLocation>
        <location evidence="3">Secreted</location>
    </subcellularLocation>
</comment>
<comment type="similarity">
    <text evidence="3">Belongs to the cysteine-rich repeat secretory protein family.</text>
</comment>
<keyword id="KW-1185">Reference proteome</keyword>
<keyword id="KW-0677">Repeat</keyword>
<keyword id="KW-0964">Secreted</keyword>
<keyword id="KW-0732">Signal</keyword>
<sequence>MSSVFGSVHILAMIAIQLLLIHSVSSLNLTNAYLHHKCSNTQGKYKQGSAFEKNLNLVLSTITSIGNFRDGFRYTEEGEDPNNVFVMFQCRGDSYWSKCPPCISTAVSGLRRRCPRNKGAIIWYDQCLLKISSVASFNKIDYENDFYLSNPKNMSDRELFNKETSALLEKLANKASDRNNLDGKQLVLYAAGEKRIGTKKVSAMVQCTKDLIFTKCFECLEGILRKFPECCDGKQGGRVLGTSCNFRYELYPFLRN</sequence>